<reference evidence="12" key="1">
    <citation type="journal article" date="2000" name="Science">
        <title>The genome sequence of Drosophila melanogaster.</title>
        <authorList>
            <person name="Adams M.D."/>
            <person name="Celniker S.E."/>
            <person name="Holt R.A."/>
            <person name="Evans C.A."/>
            <person name="Gocayne J.D."/>
            <person name="Amanatides P.G."/>
            <person name="Scherer S.E."/>
            <person name="Li P.W."/>
            <person name="Hoskins R.A."/>
            <person name="Galle R.F."/>
            <person name="George R.A."/>
            <person name="Lewis S.E."/>
            <person name="Richards S."/>
            <person name="Ashburner M."/>
            <person name="Henderson S.N."/>
            <person name="Sutton G.G."/>
            <person name="Wortman J.R."/>
            <person name="Yandell M.D."/>
            <person name="Zhang Q."/>
            <person name="Chen L.X."/>
            <person name="Brandon R.C."/>
            <person name="Rogers Y.-H.C."/>
            <person name="Blazej R.G."/>
            <person name="Champe M."/>
            <person name="Pfeiffer B.D."/>
            <person name="Wan K.H."/>
            <person name="Doyle C."/>
            <person name="Baxter E.G."/>
            <person name="Helt G."/>
            <person name="Nelson C.R."/>
            <person name="Miklos G.L.G."/>
            <person name="Abril J.F."/>
            <person name="Agbayani A."/>
            <person name="An H.-J."/>
            <person name="Andrews-Pfannkoch C."/>
            <person name="Baldwin D."/>
            <person name="Ballew R.M."/>
            <person name="Basu A."/>
            <person name="Baxendale J."/>
            <person name="Bayraktaroglu L."/>
            <person name="Beasley E.M."/>
            <person name="Beeson K.Y."/>
            <person name="Benos P.V."/>
            <person name="Berman B.P."/>
            <person name="Bhandari D."/>
            <person name="Bolshakov S."/>
            <person name="Borkova D."/>
            <person name="Botchan M.R."/>
            <person name="Bouck J."/>
            <person name="Brokstein P."/>
            <person name="Brottier P."/>
            <person name="Burtis K.C."/>
            <person name="Busam D.A."/>
            <person name="Butler H."/>
            <person name="Cadieu E."/>
            <person name="Center A."/>
            <person name="Chandra I."/>
            <person name="Cherry J.M."/>
            <person name="Cawley S."/>
            <person name="Dahlke C."/>
            <person name="Davenport L.B."/>
            <person name="Davies P."/>
            <person name="de Pablos B."/>
            <person name="Delcher A."/>
            <person name="Deng Z."/>
            <person name="Mays A.D."/>
            <person name="Dew I."/>
            <person name="Dietz S.M."/>
            <person name="Dodson K."/>
            <person name="Doup L.E."/>
            <person name="Downes M."/>
            <person name="Dugan-Rocha S."/>
            <person name="Dunkov B.C."/>
            <person name="Dunn P."/>
            <person name="Durbin K.J."/>
            <person name="Evangelista C.C."/>
            <person name="Ferraz C."/>
            <person name="Ferriera S."/>
            <person name="Fleischmann W."/>
            <person name="Fosler C."/>
            <person name="Gabrielian A.E."/>
            <person name="Garg N.S."/>
            <person name="Gelbart W.M."/>
            <person name="Glasser K."/>
            <person name="Glodek A."/>
            <person name="Gong F."/>
            <person name="Gorrell J.H."/>
            <person name="Gu Z."/>
            <person name="Guan P."/>
            <person name="Harris M."/>
            <person name="Harris N.L."/>
            <person name="Harvey D.A."/>
            <person name="Heiman T.J."/>
            <person name="Hernandez J.R."/>
            <person name="Houck J."/>
            <person name="Hostin D."/>
            <person name="Houston K.A."/>
            <person name="Howland T.J."/>
            <person name="Wei M.-H."/>
            <person name="Ibegwam C."/>
            <person name="Jalali M."/>
            <person name="Kalush F."/>
            <person name="Karpen G.H."/>
            <person name="Ke Z."/>
            <person name="Kennison J.A."/>
            <person name="Ketchum K.A."/>
            <person name="Kimmel B.E."/>
            <person name="Kodira C.D."/>
            <person name="Kraft C.L."/>
            <person name="Kravitz S."/>
            <person name="Kulp D."/>
            <person name="Lai Z."/>
            <person name="Lasko P."/>
            <person name="Lei Y."/>
            <person name="Levitsky A.A."/>
            <person name="Li J.H."/>
            <person name="Li Z."/>
            <person name="Liang Y."/>
            <person name="Lin X."/>
            <person name="Liu X."/>
            <person name="Mattei B."/>
            <person name="McIntosh T.C."/>
            <person name="McLeod M.P."/>
            <person name="McPherson D."/>
            <person name="Merkulov G."/>
            <person name="Milshina N.V."/>
            <person name="Mobarry C."/>
            <person name="Morris J."/>
            <person name="Moshrefi A."/>
            <person name="Mount S.M."/>
            <person name="Moy M."/>
            <person name="Murphy B."/>
            <person name="Murphy L."/>
            <person name="Muzny D.M."/>
            <person name="Nelson D.L."/>
            <person name="Nelson D.R."/>
            <person name="Nelson K.A."/>
            <person name="Nixon K."/>
            <person name="Nusskern D.R."/>
            <person name="Pacleb J.M."/>
            <person name="Palazzolo M."/>
            <person name="Pittman G.S."/>
            <person name="Pan S."/>
            <person name="Pollard J."/>
            <person name="Puri V."/>
            <person name="Reese M.G."/>
            <person name="Reinert K."/>
            <person name="Remington K."/>
            <person name="Saunders R.D.C."/>
            <person name="Scheeler F."/>
            <person name="Shen H."/>
            <person name="Shue B.C."/>
            <person name="Siden-Kiamos I."/>
            <person name="Simpson M."/>
            <person name="Skupski M.P."/>
            <person name="Smith T.J."/>
            <person name="Spier E."/>
            <person name="Spradling A.C."/>
            <person name="Stapleton M."/>
            <person name="Strong R."/>
            <person name="Sun E."/>
            <person name="Svirskas R."/>
            <person name="Tector C."/>
            <person name="Turner R."/>
            <person name="Venter E."/>
            <person name="Wang A.H."/>
            <person name="Wang X."/>
            <person name="Wang Z.-Y."/>
            <person name="Wassarman D.A."/>
            <person name="Weinstock G.M."/>
            <person name="Weissenbach J."/>
            <person name="Williams S.M."/>
            <person name="Woodage T."/>
            <person name="Worley K.C."/>
            <person name="Wu D."/>
            <person name="Yang S."/>
            <person name="Yao Q.A."/>
            <person name="Ye J."/>
            <person name="Yeh R.-F."/>
            <person name="Zaveri J.S."/>
            <person name="Zhan M."/>
            <person name="Zhang G."/>
            <person name="Zhao Q."/>
            <person name="Zheng L."/>
            <person name="Zheng X.H."/>
            <person name="Zhong F.N."/>
            <person name="Zhong W."/>
            <person name="Zhou X."/>
            <person name="Zhu S.C."/>
            <person name="Zhu X."/>
            <person name="Smith H.O."/>
            <person name="Gibbs R.A."/>
            <person name="Myers E.W."/>
            <person name="Rubin G.M."/>
            <person name="Venter J.C."/>
        </authorList>
    </citation>
    <scope>NUCLEOTIDE SEQUENCE [LARGE SCALE GENOMIC DNA]</scope>
    <source>
        <strain>Berkeley</strain>
    </source>
</reference>
<reference evidence="12" key="2">
    <citation type="journal article" date="2002" name="Genome Biol.">
        <title>Annotation of the Drosophila melanogaster euchromatic genome: a systematic review.</title>
        <authorList>
            <person name="Misra S."/>
            <person name="Crosby M.A."/>
            <person name="Mungall C.J."/>
            <person name="Matthews B.B."/>
            <person name="Campbell K.S."/>
            <person name="Hradecky P."/>
            <person name="Huang Y."/>
            <person name="Kaminker J.S."/>
            <person name="Millburn G.H."/>
            <person name="Prochnik S.E."/>
            <person name="Smith C.D."/>
            <person name="Tupy J.L."/>
            <person name="Whitfield E.J."/>
            <person name="Bayraktaroglu L."/>
            <person name="Berman B.P."/>
            <person name="Bettencourt B.R."/>
            <person name="Celniker S.E."/>
            <person name="de Grey A.D.N.J."/>
            <person name="Drysdale R.A."/>
            <person name="Harris N.L."/>
            <person name="Richter J."/>
            <person name="Russo S."/>
            <person name="Schroeder A.J."/>
            <person name="Shu S.Q."/>
            <person name="Stapleton M."/>
            <person name="Yamada C."/>
            <person name="Ashburner M."/>
            <person name="Gelbart W.M."/>
            <person name="Rubin G.M."/>
            <person name="Lewis S.E."/>
        </authorList>
    </citation>
    <scope>GENOME REANNOTATION</scope>
    <source>
        <strain>Berkeley</strain>
    </source>
</reference>
<reference evidence="11" key="3">
    <citation type="journal article" date="2002" name="Genome Biol.">
        <title>A Drosophila full-length cDNA resource.</title>
        <authorList>
            <person name="Stapleton M."/>
            <person name="Carlson J.W."/>
            <person name="Brokstein P."/>
            <person name="Yu C."/>
            <person name="Champe M."/>
            <person name="George R.A."/>
            <person name="Guarin H."/>
            <person name="Kronmiller B."/>
            <person name="Pacleb J.M."/>
            <person name="Park S."/>
            <person name="Wan K.H."/>
            <person name="Rubin G.M."/>
            <person name="Celniker S.E."/>
        </authorList>
    </citation>
    <scope>NUCLEOTIDE SEQUENCE [LARGE SCALE MRNA]</scope>
    <source>
        <strain evidence="11">Berkeley</strain>
        <tissue evidence="7">Embryo</tissue>
    </source>
</reference>
<reference evidence="10" key="4">
    <citation type="submission" date="1995-03" db="EMBL/GenBank/DDBJ databases">
        <authorList>
            <person name="Winge P."/>
        </authorList>
    </citation>
    <scope>NUCLEOTIDE SEQUENCE [MRNA] OF 562-597</scope>
</reference>
<reference evidence="9" key="5">
    <citation type="journal article" date="2008" name="J. Proteome Res.">
        <title>Phosphoproteome analysis of Drosophila melanogaster embryos.</title>
        <authorList>
            <person name="Zhai B."/>
            <person name="Villen J."/>
            <person name="Beausoleil S.A."/>
            <person name="Mintseris J."/>
            <person name="Gygi S.P."/>
        </authorList>
    </citation>
    <scope>PHOSPHORYLATION [LARGE SCALE ANALYSIS] AT SER-67; SER-70; SER-73; SER-87; SER-88; SER-89; THR-91; SER-93 AND THR-100</scope>
    <scope>IDENTIFICATION BY MASS SPECTROMETRY</scope>
    <source>
        <tissue evidence="8">Embryo</tissue>
    </source>
</reference>
<gene>
    <name type="ORF">CG17528</name>
</gene>
<dbReference type="EC" id="2.7.11.1"/>
<dbReference type="EMBL" id="AE013599">
    <property type="protein sequence ID" value="EAA45997.1"/>
    <property type="molecule type" value="Genomic_DNA"/>
</dbReference>
<dbReference type="EMBL" id="AE013599">
    <property type="protein sequence ID" value="EAA46000.1"/>
    <property type="molecule type" value="Genomic_DNA"/>
</dbReference>
<dbReference type="EMBL" id="AY095088">
    <property type="protein sequence ID" value="AAM11416.1"/>
    <property type="molecule type" value="mRNA"/>
</dbReference>
<dbReference type="EMBL" id="U23827">
    <property type="protein sequence ID" value="AAA65453.1"/>
    <property type="molecule type" value="mRNA"/>
</dbReference>
<dbReference type="RefSeq" id="NP_001036462.1">
    <property type="nucleotide sequence ID" value="NM_001042997.2"/>
</dbReference>
<dbReference type="RefSeq" id="NP_001036463.1">
    <property type="nucleotide sequence ID" value="NM_001042998.2"/>
</dbReference>
<dbReference type="SMR" id="Q7PLI7"/>
<dbReference type="BioGRID" id="78259">
    <property type="interactions" value="4"/>
</dbReference>
<dbReference type="DIP" id="DIP-23651N"/>
<dbReference type="FunCoup" id="Q7PLI7">
    <property type="interactions" value="1281"/>
</dbReference>
<dbReference type="STRING" id="7227.FBpp0110579"/>
<dbReference type="iPTMnet" id="Q7PLI7"/>
<dbReference type="PaxDb" id="7227-FBpp0110466"/>
<dbReference type="DNASU" id="3355134"/>
<dbReference type="EnsemblMetazoa" id="FBtr0111274">
    <property type="protein sequence ID" value="FBpp0110466"/>
    <property type="gene ID" value="FBgn0261387"/>
</dbReference>
<dbReference type="EnsemblMetazoa" id="FBtr0111277">
    <property type="protein sequence ID" value="FBpp0110579"/>
    <property type="gene ID" value="FBgn0261387"/>
</dbReference>
<dbReference type="GeneID" id="3355134"/>
<dbReference type="KEGG" id="dme:Dmel_CG17528"/>
<dbReference type="UCSC" id="CG17528-RA">
    <property type="organism name" value="d. melanogaster"/>
</dbReference>
<dbReference type="UCSC" id="CG17528-RC">
    <property type="organism name" value="d. melanogaster"/>
</dbReference>
<dbReference type="AGR" id="FB:FBgn0261387"/>
<dbReference type="FlyBase" id="FBgn0261387">
    <property type="gene designation" value="CG17528"/>
</dbReference>
<dbReference type="VEuPathDB" id="VectorBase:FBgn0261387"/>
<dbReference type="eggNOG" id="KOG0032">
    <property type="taxonomic scope" value="Eukaryota"/>
</dbReference>
<dbReference type="eggNOG" id="KOG3757">
    <property type="taxonomic scope" value="Eukaryota"/>
</dbReference>
<dbReference type="GeneTree" id="ENSGT00940000173298"/>
<dbReference type="HOGENOM" id="CLU_000288_94_1_1"/>
<dbReference type="InParanoid" id="Q7PLI7"/>
<dbReference type="OMA" id="LMTECKV"/>
<dbReference type="OrthoDB" id="1738954at2759"/>
<dbReference type="PhylomeDB" id="Q7PLI7"/>
<dbReference type="Reactome" id="R-DME-111932">
    <property type="pathway name" value="CaMK IV-mediated phosphorylation of CREB"/>
</dbReference>
<dbReference type="Reactome" id="R-DME-442729">
    <property type="pathway name" value="CREB1 phosphorylation through the activation of CaMKII/CaMKK/CaMKIV cascasde"/>
</dbReference>
<dbReference type="BioGRID-ORCS" id="3355134">
    <property type="hits" value="0 hits in 3 CRISPR screens"/>
</dbReference>
<dbReference type="GenomeRNAi" id="3355134"/>
<dbReference type="PRO" id="PR:Q7PLI7"/>
<dbReference type="Proteomes" id="UP000000803">
    <property type="component" value="Chromosome 2R"/>
</dbReference>
<dbReference type="Bgee" id="FBgn0261387">
    <property type="expression patterns" value="Expressed in adult tracheocyte (Drosophila) in insect leg and 261 other cell types or tissues"/>
</dbReference>
<dbReference type="GO" id="GO:0005737">
    <property type="term" value="C:cytoplasm"/>
    <property type="evidence" value="ECO:0000318"/>
    <property type="project" value="GO_Central"/>
</dbReference>
<dbReference type="GO" id="GO:0005634">
    <property type="term" value="C:nucleus"/>
    <property type="evidence" value="ECO:0000318"/>
    <property type="project" value="GO_Central"/>
</dbReference>
<dbReference type="GO" id="GO:0005524">
    <property type="term" value="F:ATP binding"/>
    <property type="evidence" value="ECO:0007669"/>
    <property type="project" value="UniProtKB-KW"/>
</dbReference>
<dbReference type="GO" id="GO:0009931">
    <property type="term" value="F:calcium-dependent protein serine/threonine kinase activity"/>
    <property type="evidence" value="ECO:0000318"/>
    <property type="project" value="GO_Central"/>
</dbReference>
<dbReference type="GO" id="GO:0004683">
    <property type="term" value="F:calcium/calmodulin-dependent protein kinase activity"/>
    <property type="evidence" value="ECO:0000318"/>
    <property type="project" value="GO_Central"/>
</dbReference>
<dbReference type="GO" id="GO:0005516">
    <property type="term" value="F:calmodulin binding"/>
    <property type="evidence" value="ECO:0000318"/>
    <property type="project" value="GO_Central"/>
</dbReference>
<dbReference type="GO" id="GO:0106310">
    <property type="term" value="F:protein serine kinase activity"/>
    <property type="evidence" value="ECO:0007669"/>
    <property type="project" value="RHEA"/>
</dbReference>
<dbReference type="GO" id="GO:0004674">
    <property type="term" value="F:protein serine/threonine kinase activity"/>
    <property type="evidence" value="ECO:0000250"/>
    <property type="project" value="UniProtKB"/>
</dbReference>
<dbReference type="GO" id="GO:0035556">
    <property type="term" value="P:intracellular signal transduction"/>
    <property type="evidence" value="ECO:0000318"/>
    <property type="project" value="GO_Central"/>
</dbReference>
<dbReference type="CDD" id="cd16109">
    <property type="entry name" value="DCX1"/>
    <property type="match status" value="1"/>
</dbReference>
<dbReference type="FunFam" id="3.30.200.20:FF:000042">
    <property type="entry name" value="Aurora kinase A"/>
    <property type="match status" value="1"/>
</dbReference>
<dbReference type="FunFam" id="1.10.510.10:FF:000866">
    <property type="entry name" value="Serine/threonine-protein kinase GA29083"/>
    <property type="match status" value="1"/>
</dbReference>
<dbReference type="FunFam" id="3.10.20.230:FF:000017">
    <property type="entry name" value="Serine/threonine-protein kinase GA29083"/>
    <property type="match status" value="1"/>
</dbReference>
<dbReference type="FunFam" id="3.10.20.230:FF:000021">
    <property type="entry name" value="Serine/threonine-protein kinase GA29083"/>
    <property type="match status" value="1"/>
</dbReference>
<dbReference type="Gene3D" id="3.10.20.230">
    <property type="entry name" value="Doublecortin domain"/>
    <property type="match status" value="2"/>
</dbReference>
<dbReference type="Gene3D" id="1.10.510.10">
    <property type="entry name" value="Transferase(Phosphotransferase) domain 1"/>
    <property type="match status" value="1"/>
</dbReference>
<dbReference type="InterPro" id="IPR003533">
    <property type="entry name" value="Doublecortin_dom"/>
</dbReference>
<dbReference type="InterPro" id="IPR036572">
    <property type="entry name" value="Doublecortin_dom_sf"/>
</dbReference>
<dbReference type="InterPro" id="IPR011009">
    <property type="entry name" value="Kinase-like_dom_sf"/>
</dbReference>
<dbReference type="InterPro" id="IPR000719">
    <property type="entry name" value="Prot_kinase_dom"/>
</dbReference>
<dbReference type="InterPro" id="IPR017441">
    <property type="entry name" value="Protein_kinase_ATP_BS"/>
</dbReference>
<dbReference type="InterPro" id="IPR008271">
    <property type="entry name" value="Ser/Thr_kinase_AS"/>
</dbReference>
<dbReference type="PANTHER" id="PTHR24347">
    <property type="entry name" value="SERINE/THREONINE-PROTEIN KINASE"/>
    <property type="match status" value="1"/>
</dbReference>
<dbReference type="Pfam" id="PF03607">
    <property type="entry name" value="DCX"/>
    <property type="match status" value="2"/>
</dbReference>
<dbReference type="Pfam" id="PF00069">
    <property type="entry name" value="Pkinase"/>
    <property type="match status" value="1"/>
</dbReference>
<dbReference type="SMART" id="SM00537">
    <property type="entry name" value="DCX"/>
    <property type="match status" value="2"/>
</dbReference>
<dbReference type="SMART" id="SM00220">
    <property type="entry name" value="S_TKc"/>
    <property type="match status" value="1"/>
</dbReference>
<dbReference type="SUPFAM" id="SSF89837">
    <property type="entry name" value="Doublecortin (DC)"/>
    <property type="match status" value="2"/>
</dbReference>
<dbReference type="SUPFAM" id="SSF56112">
    <property type="entry name" value="Protein kinase-like (PK-like)"/>
    <property type="match status" value="1"/>
</dbReference>
<dbReference type="PROSITE" id="PS50309">
    <property type="entry name" value="DC"/>
    <property type="match status" value="2"/>
</dbReference>
<dbReference type="PROSITE" id="PS00107">
    <property type="entry name" value="PROTEIN_KINASE_ATP"/>
    <property type="match status" value="1"/>
</dbReference>
<dbReference type="PROSITE" id="PS50011">
    <property type="entry name" value="PROTEIN_KINASE_DOM"/>
    <property type="match status" value="1"/>
</dbReference>
<dbReference type="PROSITE" id="PS00108">
    <property type="entry name" value="PROTEIN_KINASE_ST"/>
    <property type="match status" value="1"/>
</dbReference>
<sequence length="748" mass="82971">MELEKVKINSLHCNDAVLSSLQASPSATSPQSVPSKANVVTEASIIEKTNQPHNVQEDNNYNRDCDSPESSSSEQDKELDDLRNLHSSSLTNSVVVGKSTGSLNGVYSITSVTSETKTLESVVTTNSASGSACLSNTPTADHIKKRIPSSRTPTRKALRIKFYRNGDRFYPGITIPVSNERYRSFERLFEDLTRLLEENVKIPGAVRTIYNLCGKKITSLDELEDGQSYVCSCNNENFKKVEYNTGSQPLSNLPLSNSRSNSHRLAKCRPSSPLKNGLLAGSSPFPACGGGTGNGSPLIASRLSDRVTVVHPRIVTLIRSGTKPRRIMRLLLNKRNSPSFDHVLTAITQVVRLDTGYVRKVFTLSGIPVVRLSDFFGSDDVFFAYGTERINTAEDFKLEAEEQRAINVIRKTMRTTGTTCKGPKPKMPIKSKKVYPPLVDSEPFKAETTPEDDRHAALLTSTGMEINELPSNIRNTYSLGRIIGDGNFAIVFKIKHRQTGHSYALKIIDKNKCKGKEHYIDAEVRVMKKLNHPHIISLILSVDQNTNMYLVLEYVSGGDLFDAITQVTRFSENQSRIMIRHLGAAMTYLHSMGIVHRDIKPENLLVKLDEHGNVLELKLADFGLACEVNDLLYAVCGTPTYVAPEILLEVGYGLKIDVWAAGIILYILLCGFPPFVAPDNQQEPLFDAIISGIYEFPDPYWSDIGDGVRDLIANMLQADPDVRFTSEDILDHSWTIGNKGNECTTYKR</sequence>
<comment type="catalytic activity">
    <reaction evidence="1">
        <text>L-seryl-[protein] + ATP = O-phospho-L-seryl-[protein] + ADP + H(+)</text>
        <dbReference type="Rhea" id="RHEA:17989"/>
        <dbReference type="Rhea" id="RHEA-COMP:9863"/>
        <dbReference type="Rhea" id="RHEA-COMP:11604"/>
        <dbReference type="ChEBI" id="CHEBI:15378"/>
        <dbReference type="ChEBI" id="CHEBI:29999"/>
        <dbReference type="ChEBI" id="CHEBI:30616"/>
        <dbReference type="ChEBI" id="CHEBI:83421"/>
        <dbReference type="ChEBI" id="CHEBI:456216"/>
        <dbReference type="EC" id="2.7.11.1"/>
    </reaction>
</comment>
<comment type="catalytic activity">
    <reaction evidence="1">
        <text>L-threonyl-[protein] + ATP = O-phospho-L-threonyl-[protein] + ADP + H(+)</text>
        <dbReference type="Rhea" id="RHEA:46608"/>
        <dbReference type="Rhea" id="RHEA-COMP:11060"/>
        <dbReference type="Rhea" id="RHEA-COMP:11605"/>
        <dbReference type="ChEBI" id="CHEBI:15378"/>
        <dbReference type="ChEBI" id="CHEBI:30013"/>
        <dbReference type="ChEBI" id="CHEBI:30616"/>
        <dbReference type="ChEBI" id="CHEBI:61977"/>
        <dbReference type="ChEBI" id="CHEBI:456216"/>
        <dbReference type="EC" id="2.7.11.1"/>
    </reaction>
</comment>
<comment type="similarity">
    <text evidence="2">Belongs to the protein kinase superfamily. CAMK Ser/Thr protein kinase family. CaMK subfamily.</text>
</comment>
<organism>
    <name type="scientific">Drosophila melanogaster</name>
    <name type="common">Fruit fly</name>
    <dbReference type="NCBI Taxonomy" id="7227"/>
    <lineage>
        <taxon>Eukaryota</taxon>
        <taxon>Metazoa</taxon>
        <taxon>Ecdysozoa</taxon>
        <taxon>Arthropoda</taxon>
        <taxon>Hexapoda</taxon>
        <taxon>Insecta</taxon>
        <taxon>Pterygota</taxon>
        <taxon>Neoptera</taxon>
        <taxon>Endopterygota</taxon>
        <taxon>Diptera</taxon>
        <taxon>Brachycera</taxon>
        <taxon>Muscomorpha</taxon>
        <taxon>Ephydroidea</taxon>
        <taxon>Drosophilidae</taxon>
        <taxon>Drosophila</taxon>
        <taxon>Sophophora</taxon>
    </lineage>
</organism>
<accession>Q7PLI7</accession>
<accession>Q24057</accession>
<accession>Q7PLI6</accession>
<accession>Q8SWT6</accession>
<proteinExistence type="evidence at protein level"/>
<evidence type="ECO:0000250" key="1">
    <source>
        <dbReference type="UniProtKB" id="P28523"/>
    </source>
</evidence>
<evidence type="ECO:0000255" key="2"/>
<evidence type="ECO:0000255" key="3">
    <source>
        <dbReference type="PROSITE-ProRule" id="PRU00072"/>
    </source>
</evidence>
<evidence type="ECO:0000255" key="4">
    <source>
        <dbReference type="PROSITE-ProRule" id="PRU00159"/>
    </source>
</evidence>
<evidence type="ECO:0000255" key="5">
    <source>
        <dbReference type="PROSITE-ProRule" id="PRU10027"/>
    </source>
</evidence>
<evidence type="ECO:0000256" key="6">
    <source>
        <dbReference type="SAM" id="MobiDB-lite"/>
    </source>
</evidence>
<evidence type="ECO:0000269" key="7">
    <source>
    </source>
</evidence>
<evidence type="ECO:0000269" key="8">
    <source>
    </source>
</evidence>
<evidence type="ECO:0000305" key="9"/>
<evidence type="ECO:0000312" key="10">
    <source>
        <dbReference type="EMBL" id="AAA65453.1"/>
    </source>
</evidence>
<evidence type="ECO:0000312" key="11">
    <source>
        <dbReference type="EMBL" id="AAM11416.1"/>
    </source>
</evidence>
<evidence type="ECO:0000312" key="12">
    <source>
        <dbReference type="EMBL" id="EAA45997.1"/>
    </source>
</evidence>
<evidence type="ECO:0000312" key="13">
    <source>
        <dbReference type="EMBL" id="EAA46000.1"/>
    </source>
</evidence>
<keyword id="KW-0067">ATP-binding</keyword>
<keyword id="KW-0418">Kinase</keyword>
<keyword id="KW-0547">Nucleotide-binding</keyword>
<keyword id="KW-0597">Phosphoprotein</keyword>
<keyword id="KW-1185">Reference proteome</keyword>
<keyword id="KW-0677">Repeat</keyword>
<keyword id="KW-0723">Serine/threonine-protein kinase</keyword>
<keyword id="KW-0808">Transferase</keyword>
<feature type="chain" id="PRO_0000392567" description="Serine/threonine-protein kinase CG17528">
    <location>
        <begin position="1"/>
        <end position="748"/>
    </location>
</feature>
<feature type="domain" description="Doublecortin 1" evidence="3">
    <location>
        <begin position="158"/>
        <end position="244"/>
    </location>
</feature>
<feature type="domain" description="Doublecortin 2" evidence="3">
    <location>
        <begin position="313"/>
        <end position="396"/>
    </location>
</feature>
<feature type="domain" description="Protein kinase" evidence="4">
    <location>
        <begin position="477"/>
        <end position="735"/>
    </location>
</feature>
<feature type="region of interest" description="Disordered" evidence="6">
    <location>
        <begin position="22"/>
        <end position="41"/>
    </location>
</feature>
<feature type="region of interest" description="Disordered" evidence="6">
    <location>
        <begin position="47"/>
        <end position="81"/>
    </location>
</feature>
<feature type="compositionally biased region" description="Polar residues" evidence="6">
    <location>
        <begin position="22"/>
        <end position="35"/>
    </location>
</feature>
<feature type="compositionally biased region" description="Polar residues" evidence="6">
    <location>
        <begin position="47"/>
        <end position="59"/>
    </location>
</feature>
<feature type="active site" description="Proton acceptor" evidence="1 4 5">
    <location>
        <position position="598"/>
    </location>
</feature>
<feature type="binding site" evidence="1 4">
    <location>
        <begin position="483"/>
        <end position="491"/>
    </location>
    <ligand>
        <name>ATP</name>
        <dbReference type="ChEBI" id="CHEBI:30616"/>
    </ligand>
</feature>
<feature type="binding site" evidence="1 4">
    <location>
        <position position="506"/>
    </location>
    <ligand>
        <name>ATP</name>
        <dbReference type="ChEBI" id="CHEBI:30616"/>
    </ligand>
</feature>
<feature type="modified residue" description="Phosphoserine" evidence="8">
    <location>
        <position position="67"/>
    </location>
</feature>
<feature type="modified residue" description="Phosphoserine" evidence="8">
    <location>
        <position position="70"/>
    </location>
</feature>
<feature type="modified residue" description="Phosphoserine" evidence="8">
    <location>
        <position position="73"/>
    </location>
</feature>
<feature type="modified residue" description="Phosphoserine" evidence="8">
    <location>
        <position position="87"/>
    </location>
</feature>
<feature type="modified residue" description="Phosphoserine" evidence="8">
    <location>
        <position position="88"/>
    </location>
</feature>
<feature type="modified residue" description="Phosphoserine" evidence="8">
    <location>
        <position position="89"/>
    </location>
</feature>
<feature type="modified residue" description="Phosphothreonine" evidence="8">
    <location>
        <position position="91"/>
    </location>
</feature>
<feature type="modified residue" description="Phosphoserine" evidence="8">
    <location>
        <position position="93"/>
    </location>
</feature>
<feature type="modified residue" description="Phosphothreonine" evidence="8">
    <location>
        <position position="100"/>
    </location>
</feature>
<feature type="sequence conflict" description="In Ref. 3; AAM11416." evidence="9" ref="3">
    <original>A</original>
    <variation>G</variation>
    <location>
        <position position="27"/>
    </location>
</feature>
<feature type="sequence conflict" description="In Ref. 3; AAM11416." evidence="9" ref="3">
    <original>S</original>
    <variation>W</variation>
    <location>
        <position position="73"/>
    </location>
</feature>
<feature type="sequence conflict" description="In Ref. 3; AAM11416." evidence="9" ref="3">
    <original>P</original>
    <variation>S</variation>
    <location>
        <position position="324"/>
    </location>
</feature>
<protein>
    <recommendedName>
        <fullName evidence="13">Serine/threonine-protein kinase CG17528</fullName>
        <ecNumber>2.7.11.1</ecNumber>
    </recommendedName>
    <alternativeName>
        <fullName>Doublecortin-like and CAM kinase-like protein</fullName>
    </alternativeName>
    <alternativeName>
        <fullName>Protein Pk1</fullName>
    </alternativeName>
</protein>
<name>DCLK_DROME</name>